<accession>Q82IE8</accession>
<protein>
    <recommendedName>
        <fullName evidence="1">4-hydroxy-3-methylbut-2-enyl diphosphate reductase</fullName>
        <shortName evidence="1">HMBPP reductase</shortName>
        <ecNumber evidence="1">1.17.7.4</ecNumber>
    </recommendedName>
</protein>
<name>ISPH_STRAW</name>
<organism>
    <name type="scientific">Streptomyces avermitilis (strain ATCC 31267 / DSM 46492 / JCM 5070 / NBRC 14893 / NCIMB 12804 / NRRL 8165 / MA-4680)</name>
    <dbReference type="NCBI Taxonomy" id="227882"/>
    <lineage>
        <taxon>Bacteria</taxon>
        <taxon>Bacillati</taxon>
        <taxon>Actinomycetota</taxon>
        <taxon>Actinomycetes</taxon>
        <taxon>Kitasatosporales</taxon>
        <taxon>Streptomycetaceae</taxon>
        <taxon>Streptomyces</taxon>
    </lineage>
</organism>
<comment type="function">
    <text evidence="1">Catalyzes the conversion of 1-hydroxy-2-methyl-2-(E)-butenyl 4-diphosphate (HMBPP) into a mixture of isopentenyl diphosphate (IPP) and dimethylallyl diphosphate (DMAPP). Acts in the terminal step of the DOXP/MEP pathway for isoprenoid precursor biosynthesis.</text>
</comment>
<comment type="catalytic activity">
    <reaction evidence="1">
        <text>isopentenyl diphosphate + 2 oxidized [2Fe-2S]-[ferredoxin] + H2O = (2E)-4-hydroxy-3-methylbut-2-enyl diphosphate + 2 reduced [2Fe-2S]-[ferredoxin] + 2 H(+)</text>
        <dbReference type="Rhea" id="RHEA:24488"/>
        <dbReference type="Rhea" id="RHEA-COMP:10000"/>
        <dbReference type="Rhea" id="RHEA-COMP:10001"/>
        <dbReference type="ChEBI" id="CHEBI:15377"/>
        <dbReference type="ChEBI" id="CHEBI:15378"/>
        <dbReference type="ChEBI" id="CHEBI:33737"/>
        <dbReference type="ChEBI" id="CHEBI:33738"/>
        <dbReference type="ChEBI" id="CHEBI:128753"/>
        <dbReference type="ChEBI" id="CHEBI:128769"/>
        <dbReference type="EC" id="1.17.7.4"/>
    </reaction>
</comment>
<comment type="catalytic activity">
    <reaction evidence="1">
        <text>dimethylallyl diphosphate + 2 oxidized [2Fe-2S]-[ferredoxin] + H2O = (2E)-4-hydroxy-3-methylbut-2-enyl diphosphate + 2 reduced [2Fe-2S]-[ferredoxin] + 2 H(+)</text>
        <dbReference type="Rhea" id="RHEA:24825"/>
        <dbReference type="Rhea" id="RHEA-COMP:10000"/>
        <dbReference type="Rhea" id="RHEA-COMP:10001"/>
        <dbReference type="ChEBI" id="CHEBI:15377"/>
        <dbReference type="ChEBI" id="CHEBI:15378"/>
        <dbReference type="ChEBI" id="CHEBI:33737"/>
        <dbReference type="ChEBI" id="CHEBI:33738"/>
        <dbReference type="ChEBI" id="CHEBI:57623"/>
        <dbReference type="ChEBI" id="CHEBI:128753"/>
        <dbReference type="EC" id="1.17.7.4"/>
    </reaction>
</comment>
<comment type="cofactor">
    <cofactor evidence="1">
        <name>[4Fe-4S] cluster</name>
        <dbReference type="ChEBI" id="CHEBI:49883"/>
    </cofactor>
    <text evidence="1">Binds 1 [4Fe-4S] cluster per subunit.</text>
</comment>
<comment type="pathway">
    <text evidence="1">Isoprenoid biosynthesis; dimethylallyl diphosphate biosynthesis; dimethylallyl diphosphate from (2E)-4-hydroxy-3-methylbutenyl diphosphate: step 1/1.</text>
</comment>
<comment type="pathway">
    <text evidence="1">Isoprenoid biosynthesis; isopentenyl diphosphate biosynthesis via DXP pathway; isopentenyl diphosphate from 1-deoxy-D-xylulose 5-phosphate: step 6/6.</text>
</comment>
<comment type="similarity">
    <text evidence="1">Belongs to the IspH family.</text>
</comment>
<feature type="chain" id="PRO_0000128874" description="4-hydroxy-3-methylbut-2-enyl diphosphate reductase">
    <location>
        <begin position="1"/>
        <end position="338"/>
    </location>
</feature>
<feature type="active site" description="Proton donor" evidence="1">
    <location>
        <position position="135"/>
    </location>
</feature>
<feature type="binding site" evidence="1">
    <location>
        <position position="21"/>
    </location>
    <ligand>
        <name>[4Fe-4S] cluster</name>
        <dbReference type="ChEBI" id="CHEBI:49883"/>
    </ligand>
</feature>
<feature type="binding site" evidence="1">
    <location>
        <position position="50"/>
    </location>
    <ligand>
        <name>(2E)-4-hydroxy-3-methylbut-2-enyl diphosphate</name>
        <dbReference type="ChEBI" id="CHEBI:128753"/>
    </ligand>
</feature>
<feature type="binding site" evidence="1">
    <location>
        <position position="50"/>
    </location>
    <ligand>
        <name>dimethylallyl diphosphate</name>
        <dbReference type="ChEBI" id="CHEBI:57623"/>
    </ligand>
</feature>
<feature type="binding site" evidence="1">
    <location>
        <position position="50"/>
    </location>
    <ligand>
        <name>isopentenyl diphosphate</name>
        <dbReference type="ChEBI" id="CHEBI:128769"/>
    </ligand>
</feature>
<feature type="binding site" evidence="1">
    <location>
        <position position="83"/>
    </location>
    <ligand>
        <name>(2E)-4-hydroxy-3-methylbut-2-enyl diphosphate</name>
        <dbReference type="ChEBI" id="CHEBI:128753"/>
    </ligand>
</feature>
<feature type="binding site" evidence="1">
    <location>
        <position position="83"/>
    </location>
    <ligand>
        <name>dimethylallyl diphosphate</name>
        <dbReference type="ChEBI" id="CHEBI:57623"/>
    </ligand>
</feature>
<feature type="binding site" evidence="1">
    <location>
        <position position="83"/>
    </location>
    <ligand>
        <name>isopentenyl diphosphate</name>
        <dbReference type="ChEBI" id="CHEBI:128769"/>
    </ligand>
</feature>
<feature type="binding site" evidence="1">
    <location>
        <position position="105"/>
    </location>
    <ligand>
        <name>[4Fe-4S] cluster</name>
        <dbReference type="ChEBI" id="CHEBI:49883"/>
    </ligand>
</feature>
<feature type="binding site" evidence="1">
    <location>
        <position position="133"/>
    </location>
    <ligand>
        <name>(2E)-4-hydroxy-3-methylbut-2-enyl diphosphate</name>
        <dbReference type="ChEBI" id="CHEBI:128753"/>
    </ligand>
</feature>
<feature type="binding site" evidence="1">
    <location>
        <position position="133"/>
    </location>
    <ligand>
        <name>dimethylallyl diphosphate</name>
        <dbReference type="ChEBI" id="CHEBI:57623"/>
    </ligand>
</feature>
<feature type="binding site" evidence="1">
    <location>
        <position position="133"/>
    </location>
    <ligand>
        <name>isopentenyl diphosphate</name>
        <dbReference type="ChEBI" id="CHEBI:128769"/>
    </ligand>
</feature>
<feature type="binding site" evidence="1">
    <location>
        <position position="173"/>
    </location>
    <ligand>
        <name>(2E)-4-hydroxy-3-methylbut-2-enyl diphosphate</name>
        <dbReference type="ChEBI" id="CHEBI:128753"/>
    </ligand>
</feature>
<feature type="binding site" evidence="1">
    <location>
        <position position="203"/>
    </location>
    <ligand>
        <name>[4Fe-4S] cluster</name>
        <dbReference type="ChEBI" id="CHEBI:49883"/>
    </ligand>
</feature>
<feature type="binding site" evidence="1">
    <location>
        <position position="231"/>
    </location>
    <ligand>
        <name>(2E)-4-hydroxy-3-methylbut-2-enyl diphosphate</name>
        <dbReference type="ChEBI" id="CHEBI:128753"/>
    </ligand>
</feature>
<feature type="binding site" evidence="1">
    <location>
        <position position="231"/>
    </location>
    <ligand>
        <name>dimethylallyl diphosphate</name>
        <dbReference type="ChEBI" id="CHEBI:57623"/>
    </ligand>
</feature>
<feature type="binding site" evidence="1">
    <location>
        <position position="231"/>
    </location>
    <ligand>
        <name>isopentenyl diphosphate</name>
        <dbReference type="ChEBI" id="CHEBI:128769"/>
    </ligand>
</feature>
<feature type="binding site" evidence="1">
    <location>
        <position position="232"/>
    </location>
    <ligand>
        <name>(2E)-4-hydroxy-3-methylbut-2-enyl diphosphate</name>
        <dbReference type="ChEBI" id="CHEBI:128753"/>
    </ligand>
</feature>
<feature type="binding site" evidence="1">
    <location>
        <position position="232"/>
    </location>
    <ligand>
        <name>dimethylallyl diphosphate</name>
        <dbReference type="ChEBI" id="CHEBI:57623"/>
    </ligand>
</feature>
<feature type="binding site" evidence="1">
    <location>
        <position position="232"/>
    </location>
    <ligand>
        <name>isopentenyl diphosphate</name>
        <dbReference type="ChEBI" id="CHEBI:128769"/>
    </ligand>
</feature>
<feature type="binding site" evidence="1">
    <location>
        <position position="233"/>
    </location>
    <ligand>
        <name>(2E)-4-hydroxy-3-methylbut-2-enyl diphosphate</name>
        <dbReference type="ChEBI" id="CHEBI:128753"/>
    </ligand>
</feature>
<feature type="binding site" evidence="1">
    <location>
        <position position="233"/>
    </location>
    <ligand>
        <name>dimethylallyl diphosphate</name>
        <dbReference type="ChEBI" id="CHEBI:57623"/>
    </ligand>
</feature>
<feature type="binding site" evidence="1">
    <location>
        <position position="233"/>
    </location>
    <ligand>
        <name>isopentenyl diphosphate</name>
        <dbReference type="ChEBI" id="CHEBI:128769"/>
    </ligand>
</feature>
<feature type="binding site" evidence="1">
    <location>
        <position position="276"/>
    </location>
    <ligand>
        <name>(2E)-4-hydroxy-3-methylbut-2-enyl diphosphate</name>
        <dbReference type="ChEBI" id="CHEBI:128753"/>
    </ligand>
</feature>
<feature type="binding site" evidence="1">
    <location>
        <position position="276"/>
    </location>
    <ligand>
        <name>dimethylallyl diphosphate</name>
        <dbReference type="ChEBI" id="CHEBI:57623"/>
    </ligand>
</feature>
<feature type="binding site" evidence="1">
    <location>
        <position position="276"/>
    </location>
    <ligand>
        <name>isopentenyl diphosphate</name>
        <dbReference type="ChEBI" id="CHEBI:128769"/>
    </ligand>
</feature>
<dbReference type="EC" id="1.17.7.4" evidence="1"/>
<dbReference type="EMBL" id="BA000030">
    <property type="protein sequence ID" value="BAC70921.1"/>
    <property type="molecule type" value="Genomic_DNA"/>
</dbReference>
<dbReference type="RefSeq" id="WP_010984640.1">
    <property type="nucleotide sequence ID" value="NZ_JZJK01000090.1"/>
</dbReference>
<dbReference type="SMR" id="Q82IE8"/>
<dbReference type="GeneID" id="41540284"/>
<dbReference type="KEGG" id="sma:SAVERM_3210"/>
<dbReference type="eggNOG" id="COG0761">
    <property type="taxonomic scope" value="Bacteria"/>
</dbReference>
<dbReference type="HOGENOM" id="CLU_027486_1_0_11"/>
<dbReference type="OrthoDB" id="9804068at2"/>
<dbReference type="UniPathway" id="UPA00056">
    <property type="reaction ID" value="UER00097"/>
</dbReference>
<dbReference type="UniPathway" id="UPA00059">
    <property type="reaction ID" value="UER00105"/>
</dbReference>
<dbReference type="Proteomes" id="UP000000428">
    <property type="component" value="Chromosome"/>
</dbReference>
<dbReference type="GO" id="GO:0051539">
    <property type="term" value="F:4 iron, 4 sulfur cluster binding"/>
    <property type="evidence" value="ECO:0007669"/>
    <property type="project" value="UniProtKB-UniRule"/>
</dbReference>
<dbReference type="GO" id="GO:0051745">
    <property type="term" value="F:4-hydroxy-3-methylbut-2-enyl diphosphate reductase activity"/>
    <property type="evidence" value="ECO:0007669"/>
    <property type="project" value="UniProtKB-UniRule"/>
</dbReference>
<dbReference type="GO" id="GO:0046872">
    <property type="term" value="F:metal ion binding"/>
    <property type="evidence" value="ECO:0007669"/>
    <property type="project" value="UniProtKB-KW"/>
</dbReference>
<dbReference type="GO" id="GO:0050992">
    <property type="term" value="P:dimethylallyl diphosphate biosynthetic process"/>
    <property type="evidence" value="ECO:0007669"/>
    <property type="project" value="UniProtKB-UniRule"/>
</dbReference>
<dbReference type="GO" id="GO:0019288">
    <property type="term" value="P:isopentenyl diphosphate biosynthetic process, methylerythritol 4-phosphate pathway"/>
    <property type="evidence" value="ECO:0007669"/>
    <property type="project" value="UniProtKB-UniRule"/>
</dbReference>
<dbReference type="GO" id="GO:0016114">
    <property type="term" value="P:terpenoid biosynthetic process"/>
    <property type="evidence" value="ECO:0007669"/>
    <property type="project" value="UniProtKB-UniRule"/>
</dbReference>
<dbReference type="CDD" id="cd13944">
    <property type="entry name" value="lytB_ispH"/>
    <property type="match status" value="1"/>
</dbReference>
<dbReference type="Gene3D" id="3.40.50.11270">
    <property type="match status" value="1"/>
</dbReference>
<dbReference type="Gene3D" id="3.40.1010.20">
    <property type="entry name" value="4-hydroxy-3-methylbut-2-enyl diphosphate reductase, catalytic domain"/>
    <property type="match status" value="2"/>
</dbReference>
<dbReference type="HAMAP" id="MF_00191">
    <property type="entry name" value="IspH"/>
    <property type="match status" value="1"/>
</dbReference>
<dbReference type="InterPro" id="IPR003451">
    <property type="entry name" value="LytB/IspH"/>
</dbReference>
<dbReference type="NCBIfam" id="TIGR00216">
    <property type="entry name" value="ispH_lytB"/>
    <property type="match status" value="1"/>
</dbReference>
<dbReference type="NCBIfam" id="NF002188">
    <property type="entry name" value="PRK01045.1-2"/>
    <property type="match status" value="1"/>
</dbReference>
<dbReference type="NCBIfam" id="NF002189">
    <property type="entry name" value="PRK01045.1-3"/>
    <property type="match status" value="1"/>
</dbReference>
<dbReference type="NCBIfam" id="NF002190">
    <property type="entry name" value="PRK01045.1-4"/>
    <property type="match status" value="1"/>
</dbReference>
<dbReference type="PANTHER" id="PTHR30426">
    <property type="entry name" value="4-HYDROXY-3-METHYLBUT-2-ENYL DIPHOSPHATE REDUCTASE"/>
    <property type="match status" value="1"/>
</dbReference>
<dbReference type="PANTHER" id="PTHR30426:SF0">
    <property type="entry name" value="4-HYDROXY-3-METHYLBUT-2-ENYL DIPHOSPHATE REDUCTASE"/>
    <property type="match status" value="1"/>
</dbReference>
<dbReference type="Pfam" id="PF02401">
    <property type="entry name" value="LYTB"/>
    <property type="match status" value="1"/>
</dbReference>
<keyword id="KW-0004">4Fe-4S</keyword>
<keyword id="KW-0408">Iron</keyword>
<keyword id="KW-0411">Iron-sulfur</keyword>
<keyword id="KW-0414">Isoprene biosynthesis</keyword>
<keyword id="KW-0479">Metal-binding</keyword>
<keyword id="KW-0560">Oxidoreductase</keyword>
<keyword id="KW-1185">Reference proteome</keyword>
<sequence length="338" mass="36591">MVSMTASSGRRVLLAAPRGYCAGVDRAVIAVEKALEQYGAPIYVRHEIVHNKYVVQTLERKGAIFVERTAEVPEGAIVMFSAHGVAPVVHEEAARGKLATIDATCPLVTKVHKEAVRFANEDFDILLIGHEGHEEVIGTSGEAPEHITLVDGPGDVAKVEVRDPSKVVWLSQTTLSVDETMETVDALKEKFPQLISPPSDDICYATQNRQLAVKQMGEEADLVIVVGSRNSSNSVRLVEVAKLAGARDAYLVDFADEIDEAWLEGVSTVGVTSGASVPEILVEQVLEWLSQRGFEDVEIVKAAEESITFSLPKELRRDLRAEAAALVEQRTGNGPSAE</sequence>
<evidence type="ECO:0000255" key="1">
    <source>
        <dbReference type="HAMAP-Rule" id="MF_00191"/>
    </source>
</evidence>
<reference key="1">
    <citation type="journal article" date="2001" name="Proc. Natl. Acad. Sci. U.S.A.">
        <title>Genome sequence of an industrial microorganism Streptomyces avermitilis: deducing the ability of producing secondary metabolites.</title>
        <authorList>
            <person name="Omura S."/>
            <person name="Ikeda H."/>
            <person name="Ishikawa J."/>
            <person name="Hanamoto A."/>
            <person name="Takahashi C."/>
            <person name="Shinose M."/>
            <person name="Takahashi Y."/>
            <person name="Horikawa H."/>
            <person name="Nakazawa H."/>
            <person name="Osonoe T."/>
            <person name="Kikuchi H."/>
            <person name="Shiba T."/>
            <person name="Sakaki Y."/>
            <person name="Hattori M."/>
        </authorList>
    </citation>
    <scope>NUCLEOTIDE SEQUENCE [LARGE SCALE GENOMIC DNA]</scope>
    <source>
        <strain>ATCC 31267 / DSM 46492 / JCM 5070 / NBRC 14893 / NCIMB 12804 / NRRL 8165 / MA-4680</strain>
    </source>
</reference>
<reference key="2">
    <citation type="journal article" date="2003" name="Nat. Biotechnol.">
        <title>Complete genome sequence and comparative analysis of the industrial microorganism Streptomyces avermitilis.</title>
        <authorList>
            <person name="Ikeda H."/>
            <person name="Ishikawa J."/>
            <person name="Hanamoto A."/>
            <person name="Shinose M."/>
            <person name="Kikuchi H."/>
            <person name="Shiba T."/>
            <person name="Sakaki Y."/>
            <person name="Hattori M."/>
            <person name="Omura S."/>
        </authorList>
    </citation>
    <scope>NUCLEOTIDE SEQUENCE [LARGE SCALE GENOMIC DNA]</scope>
    <source>
        <strain>ATCC 31267 / DSM 46492 / JCM 5070 / NBRC 14893 / NCIMB 12804 / NRRL 8165 / MA-4680</strain>
    </source>
</reference>
<proteinExistence type="inferred from homology"/>
<gene>
    <name evidence="1" type="primary">ispH</name>
    <name type="ordered locus">SAV_3210</name>
</gene>